<sequence>MRLTAKQITWLKVALHLAAFLPLVWLFYAASQGLFRADPAKDIQHFTGRMALKLLLATLLVTPLTRLLKQPLLIRTRRLLGLWCFAWATLHLVSYSLLELGLSNLSLLGSELVSRPYLTLGIVSWLILLALALTSFQAAQRKLGRRWQTLHNFIYLVAILAPIHYLWSVKILSPQPVLYALGAIVLLAWRYKKLRQWWRT</sequence>
<feature type="chain" id="PRO_1000085529" description="Protein-methionine-sulfoxide reductase heme-binding subunit MsrQ">
    <location>
        <begin position="1"/>
        <end position="200"/>
    </location>
</feature>
<feature type="transmembrane region" description="Helical" evidence="1">
    <location>
        <begin position="8"/>
        <end position="28"/>
    </location>
</feature>
<feature type="transmembrane region" description="Helical" evidence="1">
    <location>
        <begin position="54"/>
        <end position="74"/>
    </location>
</feature>
<feature type="transmembrane region" description="Helical" evidence="1">
    <location>
        <begin position="79"/>
        <end position="99"/>
    </location>
</feature>
<feature type="transmembrane region" description="Helical" evidence="1">
    <location>
        <begin position="116"/>
        <end position="136"/>
    </location>
</feature>
<feature type="transmembrane region" description="Helical" evidence="1">
    <location>
        <begin position="153"/>
        <end position="173"/>
    </location>
</feature>
<proteinExistence type="inferred from homology"/>
<dbReference type="EMBL" id="CP000783">
    <property type="protein sequence ID" value="ABU78852.1"/>
    <property type="molecule type" value="Genomic_DNA"/>
</dbReference>
<dbReference type="RefSeq" id="WP_012125992.1">
    <property type="nucleotide sequence ID" value="NC_009778.1"/>
</dbReference>
<dbReference type="SMR" id="A7MNR0"/>
<dbReference type="KEGG" id="esa:ESA_03642"/>
<dbReference type="PATRIC" id="fig|290339.8.peg.3246"/>
<dbReference type="HOGENOM" id="CLU_080662_1_0_6"/>
<dbReference type="Proteomes" id="UP000000260">
    <property type="component" value="Chromosome"/>
</dbReference>
<dbReference type="GO" id="GO:0005886">
    <property type="term" value="C:plasma membrane"/>
    <property type="evidence" value="ECO:0007669"/>
    <property type="project" value="UniProtKB-SubCell"/>
</dbReference>
<dbReference type="GO" id="GO:0009055">
    <property type="term" value="F:electron transfer activity"/>
    <property type="evidence" value="ECO:0007669"/>
    <property type="project" value="UniProtKB-UniRule"/>
</dbReference>
<dbReference type="GO" id="GO:0010181">
    <property type="term" value="F:FMN binding"/>
    <property type="evidence" value="ECO:0007669"/>
    <property type="project" value="UniProtKB-UniRule"/>
</dbReference>
<dbReference type="GO" id="GO:0020037">
    <property type="term" value="F:heme binding"/>
    <property type="evidence" value="ECO:0007669"/>
    <property type="project" value="UniProtKB-UniRule"/>
</dbReference>
<dbReference type="GO" id="GO:0046872">
    <property type="term" value="F:metal ion binding"/>
    <property type="evidence" value="ECO:0007669"/>
    <property type="project" value="UniProtKB-KW"/>
</dbReference>
<dbReference type="GO" id="GO:0016679">
    <property type="term" value="F:oxidoreductase activity, acting on diphenols and related substances as donors"/>
    <property type="evidence" value="ECO:0007669"/>
    <property type="project" value="TreeGrafter"/>
</dbReference>
<dbReference type="GO" id="GO:0030091">
    <property type="term" value="P:protein repair"/>
    <property type="evidence" value="ECO:0007669"/>
    <property type="project" value="UniProtKB-UniRule"/>
</dbReference>
<dbReference type="HAMAP" id="MF_01207">
    <property type="entry name" value="MsrQ"/>
    <property type="match status" value="1"/>
</dbReference>
<dbReference type="InterPro" id="IPR013130">
    <property type="entry name" value="Fe3_Rdtase_TM_dom"/>
</dbReference>
<dbReference type="InterPro" id="IPR022837">
    <property type="entry name" value="MsrQ-like"/>
</dbReference>
<dbReference type="NCBIfam" id="NF003831">
    <property type="entry name" value="PRK05419.1-2"/>
    <property type="match status" value="1"/>
</dbReference>
<dbReference type="NCBIfam" id="NF003832">
    <property type="entry name" value="PRK05419.1-4"/>
    <property type="match status" value="1"/>
</dbReference>
<dbReference type="PANTHER" id="PTHR36964">
    <property type="entry name" value="PROTEIN-METHIONINE-SULFOXIDE REDUCTASE HEME-BINDING SUBUNIT MSRQ"/>
    <property type="match status" value="1"/>
</dbReference>
<dbReference type="PANTHER" id="PTHR36964:SF1">
    <property type="entry name" value="PROTEIN-METHIONINE-SULFOXIDE REDUCTASE HEME-BINDING SUBUNIT MSRQ"/>
    <property type="match status" value="1"/>
</dbReference>
<dbReference type="Pfam" id="PF01794">
    <property type="entry name" value="Ferric_reduct"/>
    <property type="match status" value="1"/>
</dbReference>
<evidence type="ECO:0000255" key="1">
    <source>
        <dbReference type="HAMAP-Rule" id="MF_01207"/>
    </source>
</evidence>
<name>MSRQ_CROS8</name>
<reference key="1">
    <citation type="journal article" date="2010" name="PLoS ONE">
        <title>Genome sequence of Cronobacter sakazakii BAA-894 and comparative genomic hybridization analysis with other Cronobacter species.</title>
        <authorList>
            <person name="Kucerova E."/>
            <person name="Clifton S.W."/>
            <person name="Xia X.Q."/>
            <person name="Long F."/>
            <person name="Porwollik S."/>
            <person name="Fulton L."/>
            <person name="Fronick C."/>
            <person name="Minx P."/>
            <person name="Kyung K."/>
            <person name="Warren W."/>
            <person name="Fulton R."/>
            <person name="Feng D."/>
            <person name="Wollam A."/>
            <person name="Shah N."/>
            <person name="Bhonagiri V."/>
            <person name="Nash W.E."/>
            <person name="Hallsworth-Pepin K."/>
            <person name="Wilson R.K."/>
            <person name="McClelland M."/>
            <person name="Forsythe S.J."/>
        </authorList>
    </citation>
    <scope>NUCLEOTIDE SEQUENCE [LARGE SCALE GENOMIC DNA]</scope>
    <source>
        <strain>ATCC BAA-894</strain>
    </source>
</reference>
<gene>
    <name evidence="1" type="primary">msrQ</name>
    <name type="ordered locus">ESA_03642</name>
</gene>
<accession>A7MNR0</accession>
<keyword id="KW-0997">Cell inner membrane</keyword>
<keyword id="KW-1003">Cell membrane</keyword>
<keyword id="KW-0249">Electron transport</keyword>
<keyword id="KW-0285">Flavoprotein</keyword>
<keyword id="KW-0288">FMN</keyword>
<keyword id="KW-0349">Heme</keyword>
<keyword id="KW-0408">Iron</keyword>
<keyword id="KW-0472">Membrane</keyword>
<keyword id="KW-0479">Metal-binding</keyword>
<keyword id="KW-1185">Reference proteome</keyword>
<keyword id="KW-0812">Transmembrane</keyword>
<keyword id="KW-1133">Transmembrane helix</keyword>
<keyword id="KW-0813">Transport</keyword>
<protein>
    <recommendedName>
        <fullName evidence="1">Protein-methionine-sulfoxide reductase heme-binding subunit MsrQ</fullName>
    </recommendedName>
    <alternativeName>
        <fullName evidence="1">Flavocytochrome MsrQ</fullName>
    </alternativeName>
</protein>
<comment type="function">
    <text evidence="1">Part of the MsrPQ system that repairs oxidized periplasmic proteins containing methionine sulfoxide residues (Met-O), using respiratory chain electrons. Thus protects these proteins from oxidative-stress damage caused by reactive species of oxygen and chlorine generated by the host defense mechanisms. MsrPQ is essential for the maintenance of envelope integrity under bleach stress, rescuing a wide series of structurally unrelated periplasmic proteins from methionine oxidation. MsrQ provides electrons for reduction to the reductase catalytic subunit MsrP, using the quinone pool of the respiratory chain.</text>
</comment>
<comment type="cofactor">
    <cofactor evidence="1">
        <name>FMN</name>
        <dbReference type="ChEBI" id="CHEBI:58210"/>
    </cofactor>
    <text evidence="1">Binds 1 FMN per subunit.</text>
</comment>
<comment type="cofactor">
    <cofactor evidence="1">
        <name>heme b</name>
        <dbReference type="ChEBI" id="CHEBI:60344"/>
    </cofactor>
    <text evidence="1">Binds 1 heme b (iron(II)-protoporphyrin IX) group per subunit.</text>
</comment>
<comment type="subunit">
    <text evidence="1">Heterodimer of a catalytic subunit (MsrP) and a heme-binding subunit (MsrQ).</text>
</comment>
<comment type="subcellular location">
    <subcellularLocation>
        <location evidence="1">Cell inner membrane</location>
        <topology evidence="1">Multi-pass membrane protein</topology>
    </subcellularLocation>
</comment>
<comment type="similarity">
    <text evidence="1">Belongs to the MsrQ family.</text>
</comment>
<organism>
    <name type="scientific">Cronobacter sakazakii (strain ATCC BAA-894)</name>
    <name type="common">Enterobacter sakazakii</name>
    <dbReference type="NCBI Taxonomy" id="290339"/>
    <lineage>
        <taxon>Bacteria</taxon>
        <taxon>Pseudomonadati</taxon>
        <taxon>Pseudomonadota</taxon>
        <taxon>Gammaproteobacteria</taxon>
        <taxon>Enterobacterales</taxon>
        <taxon>Enterobacteriaceae</taxon>
        <taxon>Cronobacter</taxon>
    </lineage>
</organism>